<accession>A6VH00</accession>
<sequence>MSLMDPLANALNHVSNCESVGKNVAYLKPASKLIGRVLNVMQDQGYIGNFEYIEDGKAGVYKVDLIGQINKCGAVKPRFAVKNHDFEKFEKRYLPAKGFGLLIVSTPKGLMTHDEARNAGVGGRLISYIY</sequence>
<reference key="1">
    <citation type="submission" date="2007-06" db="EMBL/GenBank/DDBJ databases">
        <title>Complete sequence of Methanococcus maripaludis C7.</title>
        <authorList>
            <consortium name="US DOE Joint Genome Institute"/>
            <person name="Copeland A."/>
            <person name="Lucas S."/>
            <person name="Lapidus A."/>
            <person name="Barry K."/>
            <person name="Glavina del Rio T."/>
            <person name="Dalin E."/>
            <person name="Tice H."/>
            <person name="Pitluck S."/>
            <person name="Clum A."/>
            <person name="Schmutz J."/>
            <person name="Larimer F."/>
            <person name="Land M."/>
            <person name="Hauser L."/>
            <person name="Kyrpides N."/>
            <person name="Anderson I."/>
            <person name="Sieprawska-Lupa M."/>
            <person name="Whitman W.B."/>
            <person name="Richardson P."/>
        </authorList>
    </citation>
    <scope>NUCLEOTIDE SEQUENCE [LARGE SCALE GENOMIC DNA]</scope>
    <source>
        <strain>C7 / ATCC BAA-1331</strain>
    </source>
</reference>
<organism>
    <name type="scientific">Methanococcus maripaludis (strain C7 / ATCC BAA-1331)</name>
    <dbReference type="NCBI Taxonomy" id="426368"/>
    <lineage>
        <taxon>Archaea</taxon>
        <taxon>Methanobacteriati</taxon>
        <taxon>Methanobacteriota</taxon>
        <taxon>Methanomada group</taxon>
        <taxon>Methanococci</taxon>
        <taxon>Methanococcales</taxon>
        <taxon>Methanococcaceae</taxon>
        <taxon>Methanococcus</taxon>
    </lineage>
</organism>
<feature type="chain" id="PRO_1000051787" description="Small ribosomal subunit protein uS8">
    <location>
        <begin position="1"/>
        <end position="130"/>
    </location>
</feature>
<gene>
    <name evidence="1" type="primary">rps8</name>
    <name type="ordered locus">MmarC7_0659</name>
</gene>
<comment type="function">
    <text evidence="1">One of the primary rRNA binding proteins, it binds directly to 16S rRNA central domain where it helps coordinate assembly of the platform of the 30S subunit.</text>
</comment>
<comment type="subunit">
    <text evidence="1">Part of the 30S ribosomal subunit.</text>
</comment>
<comment type="similarity">
    <text evidence="1">Belongs to the universal ribosomal protein uS8 family.</text>
</comment>
<protein>
    <recommendedName>
        <fullName evidence="1">Small ribosomal subunit protein uS8</fullName>
    </recommendedName>
    <alternativeName>
        <fullName evidence="2">30S ribosomal protein S8</fullName>
    </alternativeName>
</protein>
<keyword id="KW-0687">Ribonucleoprotein</keyword>
<keyword id="KW-0689">Ribosomal protein</keyword>
<keyword id="KW-0694">RNA-binding</keyword>
<keyword id="KW-0699">rRNA-binding</keyword>
<evidence type="ECO:0000255" key="1">
    <source>
        <dbReference type="HAMAP-Rule" id="MF_01302"/>
    </source>
</evidence>
<evidence type="ECO:0000305" key="2"/>
<dbReference type="EMBL" id="CP000745">
    <property type="protein sequence ID" value="ABR65726.1"/>
    <property type="molecule type" value="Genomic_DNA"/>
</dbReference>
<dbReference type="SMR" id="A6VH00"/>
<dbReference type="STRING" id="426368.MmarC7_0659"/>
<dbReference type="KEGG" id="mmz:MmarC7_0659"/>
<dbReference type="eggNOG" id="arCOG04091">
    <property type="taxonomic scope" value="Archaea"/>
</dbReference>
<dbReference type="HOGENOM" id="CLU_098428_1_1_2"/>
<dbReference type="OrthoDB" id="5670at2157"/>
<dbReference type="GO" id="GO:1990904">
    <property type="term" value="C:ribonucleoprotein complex"/>
    <property type="evidence" value="ECO:0007669"/>
    <property type="project" value="UniProtKB-KW"/>
</dbReference>
<dbReference type="GO" id="GO:0005840">
    <property type="term" value="C:ribosome"/>
    <property type="evidence" value="ECO:0007669"/>
    <property type="project" value="UniProtKB-KW"/>
</dbReference>
<dbReference type="GO" id="GO:0019843">
    <property type="term" value="F:rRNA binding"/>
    <property type="evidence" value="ECO:0007669"/>
    <property type="project" value="UniProtKB-UniRule"/>
</dbReference>
<dbReference type="GO" id="GO:0003735">
    <property type="term" value="F:structural constituent of ribosome"/>
    <property type="evidence" value="ECO:0007669"/>
    <property type="project" value="InterPro"/>
</dbReference>
<dbReference type="GO" id="GO:0006412">
    <property type="term" value="P:translation"/>
    <property type="evidence" value="ECO:0007669"/>
    <property type="project" value="UniProtKB-UniRule"/>
</dbReference>
<dbReference type="FunFam" id="3.30.1370.30:FF:000001">
    <property type="entry name" value="40S ribosomal protein S15a"/>
    <property type="match status" value="1"/>
</dbReference>
<dbReference type="Gene3D" id="3.30.1370.30">
    <property type="match status" value="1"/>
</dbReference>
<dbReference type="Gene3D" id="3.30.1490.10">
    <property type="match status" value="1"/>
</dbReference>
<dbReference type="HAMAP" id="MF_01302_A">
    <property type="entry name" value="Ribosomal_uS8_A"/>
    <property type="match status" value="1"/>
</dbReference>
<dbReference type="InterPro" id="IPR000630">
    <property type="entry name" value="Ribosomal_uS8"/>
</dbReference>
<dbReference type="InterPro" id="IPR047863">
    <property type="entry name" value="Ribosomal_uS8_CS"/>
</dbReference>
<dbReference type="InterPro" id="IPR035987">
    <property type="entry name" value="Ribosomal_uS8_sf"/>
</dbReference>
<dbReference type="NCBIfam" id="NF003115">
    <property type="entry name" value="PRK04034.1"/>
    <property type="match status" value="1"/>
</dbReference>
<dbReference type="PANTHER" id="PTHR11758">
    <property type="entry name" value="40S RIBOSOMAL PROTEIN S15A"/>
    <property type="match status" value="1"/>
</dbReference>
<dbReference type="Pfam" id="PF00410">
    <property type="entry name" value="Ribosomal_S8"/>
    <property type="match status" value="1"/>
</dbReference>
<dbReference type="SUPFAM" id="SSF56047">
    <property type="entry name" value="Ribosomal protein S8"/>
    <property type="match status" value="1"/>
</dbReference>
<dbReference type="PROSITE" id="PS00053">
    <property type="entry name" value="RIBOSOMAL_S8"/>
    <property type="match status" value="1"/>
</dbReference>
<proteinExistence type="inferred from homology"/>
<name>RS8_METM7</name>